<gene>
    <name evidence="1" type="primary">glpE</name>
    <name type="ordered locus">SO_4672</name>
</gene>
<sequence length="101" mass="11135">MSSFKHLSVNQLVQMTEAKSVQIVDIRDGNSFNNGHIDGAFNLNNENLAHFIGQADMDRPLVVVCYHGISSQNAAQYLCEQGFDDVYSLDGGFSAWHEANA</sequence>
<feature type="chain" id="PRO_0000200565" description="Thiosulfate sulfurtransferase GlpE">
    <location>
        <begin position="1"/>
        <end position="101"/>
    </location>
</feature>
<feature type="domain" description="Rhodanese" evidence="1">
    <location>
        <begin position="17"/>
        <end position="101"/>
    </location>
</feature>
<feature type="active site" description="Cysteine persulfide intermediate" evidence="1">
    <location>
        <position position="65"/>
    </location>
</feature>
<protein>
    <recommendedName>
        <fullName evidence="1">Thiosulfate sulfurtransferase GlpE</fullName>
        <ecNumber evidence="1">2.8.1.1</ecNumber>
    </recommendedName>
</protein>
<evidence type="ECO:0000255" key="1">
    <source>
        <dbReference type="HAMAP-Rule" id="MF_01009"/>
    </source>
</evidence>
<keyword id="KW-0963">Cytoplasm</keyword>
<keyword id="KW-1185">Reference proteome</keyword>
<keyword id="KW-0808">Transferase</keyword>
<dbReference type="EC" id="2.8.1.1" evidence="1"/>
<dbReference type="EMBL" id="AE014299">
    <property type="protein sequence ID" value="AAN57631.1"/>
    <property type="molecule type" value="Genomic_DNA"/>
</dbReference>
<dbReference type="RefSeq" id="NP_720187.1">
    <property type="nucleotide sequence ID" value="NC_004347.2"/>
</dbReference>
<dbReference type="RefSeq" id="WP_011074263.1">
    <property type="nucleotide sequence ID" value="NC_004347.2"/>
</dbReference>
<dbReference type="SMR" id="Q8E8J2"/>
<dbReference type="STRING" id="211586.SO_4672"/>
<dbReference type="PaxDb" id="211586-SO_4672"/>
<dbReference type="KEGG" id="son:SO_4672"/>
<dbReference type="PATRIC" id="fig|211586.12.peg.4530"/>
<dbReference type="eggNOG" id="COG0607">
    <property type="taxonomic scope" value="Bacteria"/>
</dbReference>
<dbReference type="HOGENOM" id="CLU_089574_14_0_6"/>
<dbReference type="OrthoDB" id="9811849at2"/>
<dbReference type="PhylomeDB" id="Q8E8J2"/>
<dbReference type="BioCyc" id="SONE211586:G1GMP-4319-MONOMER"/>
<dbReference type="Proteomes" id="UP000008186">
    <property type="component" value="Chromosome"/>
</dbReference>
<dbReference type="GO" id="GO:0005737">
    <property type="term" value="C:cytoplasm"/>
    <property type="evidence" value="ECO:0007669"/>
    <property type="project" value="UniProtKB-SubCell"/>
</dbReference>
<dbReference type="GO" id="GO:0004792">
    <property type="term" value="F:thiosulfate-cyanide sulfurtransferase activity"/>
    <property type="evidence" value="ECO:0007669"/>
    <property type="project" value="UniProtKB-UniRule"/>
</dbReference>
<dbReference type="GO" id="GO:0006071">
    <property type="term" value="P:glycerol metabolic process"/>
    <property type="evidence" value="ECO:0007669"/>
    <property type="project" value="UniProtKB-UniRule"/>
</dbReference>
<dbReference type="CDD" id="cd01444">
    <property type="entry name" value="GlpE_ST"/>
    <property type="match status" value="1"/>
</dbReference>
<dbReference type="Gene3D" id="3.40.250.10">
    <property type="entry name" value="Rhodanese-like domain"/>
    <property type="match status" value="1"/>
</dbReference>
<dbReference type="HAMAP" id="MF_01009">
    <property type="entry name" value="Thiosulf_sulfurtr"/>
    <property type="match status" value="1"/>
</dbReference>
<dbReference type="InterPro" id="IPR050229">
    <property type="entry name" value="GlpE_sulfurtransferase"/>
</dbReference>
<dbReference type="InterPro" id="IPR001763">
    <property type="entry name" value="Rhodanese-like_dom"/>
</dbReference>
<dbReference type="InterPro" id="IPR036873">
    <property type="entry name" value="Rhodanese-like_dom_sf"/>
</dbReference>
<dbReference type="InterPro" id="IPR023695">
    <property type="entry name" value="Thiosulf_sulfurTrfase"/>
</dbReference>
<dbReference type="NCBIfam" id="NF001195">
    <property type="entry name" value="PRK00162.1"/>
    <property type="match status" value="1"/>
</dbReference>
<dbReference type="PANTHER" id="PTHR43031">
    <property type="entry name" value="FAD-DEPENDENT OXIDOREDUCTASE"/>
    <property type="match status" value="1"/>
</dbReference>
<dbReference type="PANTHER" id="PTHR43031:SF6">
    <property type="entry name" value="THIOSULFATE SULFURTRANSFERASE GLPE"/>
    <property type="match status" value="1"/>
</dbReference>
<dbReference type="Pfam" id="PF00581">
    <property type="entry name" value="Rhodanese"/>
    <property type="match status" value="1"/>
</dbReference>
<dbReference type="SMART" id="SM00450">
    <property type="entry name" value="RHOD"/>
    <property type="match status" value="1"/>
</dbReference>
<dbReference type="SUPFAM" id="SSF52821">
    <property type="entry name" value="Rhodanese/Cell cycle control phosphatase"/>
    <property type="match status" value="1"/>
</dbReference>
<dbReference type="PROSITE" id="PS50206">
    <property type="entry name" value="RHODANESE_3"/>
    <property type="match status" value="1"/>
</dbReference>
<reference key="1">
    <citation type="journal article" date="2002" name="Nat. Biotechnol.">
        <title>Genome sequence of the dissimilatory metal ion-reducing bacterium Shewanella oneidensis.</title>
        <authorList>
            <person name="Heidelberg J.F."/>
            <person name="Paulsen I.T."/>
            <person name="Nelson K.E."/>
            <person name="Gaidos E.J."/>
            <person name="Nelson W.C."/>
            <person name="Read T.D."/>
            <person name="Eisen J.A."/>
            <person name="Seshadri R."/>
            <person name="Ward N.L."/>
            <person name="Methe B.A."/>
            <person name="Clayton R.A."/>
            <person name="Meyer T."/>
            <person name="Tsapin A."/>
            <person name="Scott J."/>
            <person name="Beanan M.J."/>
            <person name="Brinkac L.M."/>
            <person name="Daugherty S.C."/>
            <person name="DeBoy R.T."/>
            <person name="Dodson R.J."/>
            <person name="Durkin A.S."/>
            <person name="Haft D.H."/>
            <person name="Kolonay J.F."/>
            <person name="Madupu R."/>
            <person name="Peterson J.D."/>
            <person name="Umayam L.A."/>
            <person name="White O."/>
            <person name="Wolf A.M."/>
            <person name="Vamathevan J.J."/>
            <person name="Weidman J.F."/>
            <person name="Impraim M."/>
            <person name="Lee K."/>
            <person name="Berry K.J."/>
            <person name="Lee C."/>
            <person name="Mueller J."/>
            <person name="Khouri H.M."/>
            <person name="Gill J."/>
            <person name="Utterback T.R."/>
            <person name="McDonald L.A."/>
            <person name="Feldblyum T.V."/>
            <person name="Smith H.O."/>
            <person name="Venter J.C."/>
            <person name="Nealson K.H."/>
            <person name="Fraser C.M."/>
        </authorList>
    </citation>
    <scope>NUCLEOTIDE SEQUENCE [LARGE SCALE GENOMIC DNA]</scope>
    <source>
        <strain>ATCC 700550 / JCM 31522 / CIP 106686 / LMG 19005 / NCIMB 14063 / MR-1</strain>
    </source>
</reference>
<accession>Q8E8J2</accession>
<comment type="function">
    <text evidence="1">Transferase that catalyzes the transfer of sulfur from thiosulfate to thiophilic acceptors such as cyanide or dithiols. May function in a CysM-independent thiosulfate assimilation pathway by catalyzing the conversion of thiosulfate to sulfite, which can then be used for L-cysteine biosynthesis.</text>
</comment>
<comment type="catalytic activity">
    <reaction evidence="1">
        <text>thiosulfate + hydrogen cyanide = thiocyanate + sulfite + 2 H(+)</text>
        <dbReference type="Rhea" id="RHEA:16881"/>
        <dbReference type="ChEBI" id="CHEBI:15378"/>
        <dbReference type="ChEBI" id="CHEBI:17359"/>
        <dbReference type="ChEBI" id="CHEBI:18022"/>
        <dbReference type="ChEBI" id="CHEBI:18407"/>
        <dbReference type="ChEBI" id="CHEBI:33542"/>
        <dbReference type="EC" id="2.8.1.1"/>
    </reaction>
</comment>
<comment type="catalytic activity">
    <reaction evidence="1">
        <text>thiosulfate + [thioredoxin]-dithiol = [thioredoxin]-disulfide + hydrogen sulfide + sulfite + 2 H(+)</text>
        <dbReference type="Rhea" id="RHEA:83859"/>
        <dbReference type="Rhea" id="RHEA-COMP:10698"/>
        <dbReference type="Rhea" id="RHEA-COMP:10700"/>
        <dbReference type="ChEBI" id="CHEBI:15378"/>
        <dbReference type="ChEBI" id="CHEBI:17359"/>
        <dbReference type="ChEBI" id="CHEBI:29919"/>
        <dbReference type="ChEBI" id="CHEBI:29950"/>
        <dbReference type="ChEBI" id="CHEBI:33542"/>
        <dbReference type="ChEBI" id="CHEBI:50058"/>
    </reaction>
</comment>
<comment type="subcellular location">
    <subcellularLocation>
        <location evidence="1">Cytoplasm</location>
    </subcellularLocation>
</comment>
<comment type="similarity">
    <text evidence="1">Belongs to the GlpE family.</text>
</comment>
<name>GLPE_SHEON</name>
<proteinExistence type="inferred from homology"/>
<organism>
    <name type="scientific">Shewanella oneidensis (strain ATCC 700550 / JCM 31522 / CIP 106686 / LMG 19005 / NCIMB 14063 / MR-1)</name>
    <dbReference type="NCBI Taxonomy" id="211586"/>
    <lineage>
        <taxon>Bacteria</taxon>
        <taxon>Pseudomonadati</taxon>
        <taxon>Pseudomonadota</taxon>
        <taxon>Gammaproteobacteria</taxon>
        <taxon>Alteromonadales</taxon>
        <taxon>Shewanellaceae</taxon>
        <taxon>Shewanella</taxon>
    </lineage>
</organism>